<proteinExistence type="inferred from homology"/>
<dbReference type="EC" id="2.7.1.167" evidence="1"/>
<dbReference type="EC" id="2.7.7.70" evidence="1"/>
<dbReference type="EMBL" id="AM286415">
    <property type="protein sequence ID" value="CAL13700.1"/>
    <property type="molecule type" value="Genomic_DNA"/>
</dbReference>
<dbReference type="RefSeq" id="WP_011817219.1">
    <property type="nucleotide sequence ID" value="NC_008800.1"/>
</dbReference>
<dbReference type="RefSeq" id="YP_001007828.1">
    <property type="nucleotide sequence ID" value="NC_008800.1"/>
</dbReference>
<dbReference type="SMR" id="A1JQV6"/>
<dbReference type="KEGG" id="yen:YE3673"/>
<dbReference type="PATRIC" id="fig|393305.7.peg.3909"/>
<dbReference type="eggNOG" id="COG0615">
    <property type="taxonomic scope" value="Bacteria"/>
</dbReference>
<dbReference type="eggNOG" id="COG2870">
    <property type="taxonomic scope" value="Bacteria"/>
</dbReference>
<dbReference type="HOGENOM" id="CLU_021150_2_1_6"/>
<dbReference type="OrthoDB" id="9802794at2"/>
<dbReference type="UniPathway" id="UPA00356">
    <property type="reaction ID" value="UER00437"/>
</dbReference>
<dbReference type="UniPathway" id="UPA00356">
    <property type="reaction ID" value="UER00439"/>
</dbReference>
<dbReference type="Proteomes" id="UP000000642">
    <property type="component" value="Chromosome"/>
</dbReference>
<dbReference type="GO" id="GO:0005829">
    <property type="term" value="C:cytosol"/>
    <property type="evidence" value="ECO:0007669"/>
    <property type="project" value="TreeGrafter"/>
</dbReference>
<dbReference type="GO" id="GO:0005524">
    <property type="term" value="F:ATP binding"/>
    <property type="evidence" value="ECO:0007669"/>
    <property type="project" value="UniProtKB-UniRule"/>
</dbReference>
<dbReference type="GO" id="GO:0033785">
    <property type="term" value="F:heptose 7-phosphate kinase activity"/>
    <property type="evidence" value="ECO:0007669"/>
    <property type="project" value="UniProtKB-UniRule"/>
</dbReference>
<dbReference type="GO" id="GO:0033786">
    <property type="term" value="F:heptose-1-phosphate adenylyltransferase activity"/>
    <property type="evidence" value="ECO:0007669"/>
    <property type="project" value="UniProtKB-UniRule"/>
</dbReference>
<dbReference type="GO" id="GO:0016773">
    <property type="term" value="F:phosphotransferase activity, alcohol group as acceptor"/>
    <property type="evidence" value="ECO:0007669"/>
    <property type="project" value="InterPro"/>
</dbReference>
<dbReference type="GO" id="GO:0097171">
    <property type="term" value="P:ADP-L-glycero-beta-D-manno-heptose biosynthetic process"/>
    <property type="evidence" value="ECO:0007669"/>
    <property type="project" value="UniProtKB-UniPathway"/>
</dbReference>
<dbReference type="CDD" id="cd01172">
    <property type="entry name" value="RfaE_like"/>
    <property type="match status" value="1"/>
</dbReference>
<dbReference type="FunFam" id="3.40.1190.20:FF:000002">
    <property type="entry name" value="Bifunctional protein HldE"/>
    <property type="match status" value="1"/>
</dbReference>
<dbReference type="FunFam" id="3.40.50.620:FF:000028">
    <property type="entry name" value="Bifunctional protein HldE"/>
    <property type="match status" value="1"/>
</dbReference>
<dbReference type="Gene3D" id="3.40.1190.20">
    <property type="match status" value="1"/>
</dbReference>
<dbReference type="Gene3D" id="3.40.50.620">
    <property type="entry name" value="HUPs"/>
    <property type="match status" value="1"/>
</dbReference>
<dbReference type="HAMAP" id="MF_01603">
    <property type="entry name" value="HldE"/>
    <property type="match status" value="1"/>
</dbReference>
<dbReference type="InterPro" id="IPR023030">
    <property type="entry name" value="Bifunc_HldE"/>
</dbReference>
<dbReference type="InterPro" id="IPR002173">
    <property type="entry name" value="Carboh/pur_kinase_PfkB_CS"/>
</dbReference>
<dbReference type="InterPro" id="IPR004821">
    <property type="entry name" value="Cyt_trans-like"/>
</dbReference>
<dbReference type="InterPro" id="IPR011611">
    <property type="entry name" value="PfkB_dom"/>
</dbReference>
<dbReference type="InterPro" id="IPR011913">
    <property type="entry name" value="RfaE_dom_I"/>
</dbReference>
<dbReference type="InterPro" id="IPR011914">
    <property type="entry name" value="RfaE_dom_II"/>
</dbReference>
<dbReference type="InterPro" id="IPR029056">
    <property type="entry name" value="Ribokinase-like"/>
</dbReference>
<dbReference type="InterPro" id="IPR014729">
    <property type="entry name" value="Rossmann-like_a/b/a_fold"/>
</dbReference>
<dbReference type="NCBIfam" id="TIGR00125">
    <property type="entry name" value="cyt_tran_rel"/>
    <property type="match status" value="1"/>
</dbReference>
<dbReference type="NCBIfam" id="NF008454">
    <property type="entry name" value="PRK11316.1"/>
    <property type="match status" value="1"/>
</dbReference>
<dbReference type="NCBIfam" id="TIGR02198">
    <property type="entry name" value="rfaE_dom_I"/>
    <property type="match status" value="1"/>
</dbReference>
<dbReference type="NCBIfam" id="TIGR02199">
    <property type="entry name" value="rfaE_dom_II"/>
    <property type="match status" value="1"/>
</dbReference>
<dbReference type="PANTHER" id="PTHR46969">
    <property type="entry name" value="BIFUNCTIONAL PROTEIN HLDE"/>
    <property type="match status" value="1"/>
</dbReference>
<dbReference type="PANTHER" id="PTHR46969:SF1">
    <property type="entry name" value="BIFUNCTIONAL PROTEIN HLDE"/>
    <property type="match status" value="1"/>
</dbReference>
<dbReference type="Pfam" id="PF01467">
    <property type="entry name" value="CTP_transf_like"/>
    <property type="match status" value="1"/>
</dbReference>
<dbReference type="Pfam" id="PF00294">
    <property type="entry name" value="PfkB"/>
    <property type="match status" value="1"/>
</dbReference>
<dbReference type="SUPFAM" id="SSF52374">
    <property type="entry name" value="Nucleotidylyl transferase"/>
    <property type="match status" value="1"/>
</dbReference>
<dbReference type="SUPFAM" id="SSF53613">
    <property type="entry name" value="Ribokinase-like"/>
    <property type="match status" value="1"/>
</dbReference>
<dbReference type="PROSITE" id="PS00583">
    <property type="entry name" value="PFKB_KINASES_1"/>
    <property type="match status" value="1"/>
</dbReference>
<keyword id="KW-0067">ATP-binding</keyword>
<keyword id="KW-0119">Carbohydrate metabolism</keyword>
<keyword id="KW-0418">Kinase</keyword>
<keyword id="KW-0511">Multifunctional enzyme</keyword>
<keyword id="KW-0547">Nucleotide-binding</keyword>
<keyword id="KW-0548">Nucleotidyltransferase</keyword>
<keyword id="KW-0808">Transferase</keyword>
<accession>A1JQV6</accession>
<reference key="1">
    <citation type="journal article" date="2006" name="PLoS Genet.">
        <title>The complete genome sequence and comparative genome analysis of the high pathogenicity Yersinia enterocolitica strain 8081.</title>
        <authorList>
            <person name="Thomson N.R."/>
            <person name="Howard S."/>
            <person name="Wren B.W."/>
            <person name="Holden M.T.G."/>
            <person name="Crossman L."/>
            <person name="Challis G.L."/>
            <person name="Churcher C."/>
            <person name="Mungall K."/>
            <person name="Brooks K."/>
            <person name="Chillingworth T."/>
            <person name="Feltwell T."/>
            <person name="Abdellah Z."/>
            <person name="Hauser H."/>
            <person name="Jagels K."/>
            <person name="Maddison M."/>
            <person name="Moule S."/>
            <person name="Sanders M."/>
            <person name="Whitehead S."/>
            <person name="Quail M.A."/>
            <person name="Dougan G."/>
            <person name="Parkhill J."/>
            <person name="Prentice M.B."/>
        </authorList>
    </citation>
    <scope>NUCLEOTIDE SEQUENCE [LARGE SCALE GENOMIC DNA]</scope>
    <source>
        <strain>NCTC 13174 / 8081</strain>
    </source>
</reference>
<feature type="chain" id="PRO_0000291695" description="Bifunctional protein HldE">
    <location>
        <begin position="1"/>
        <end position="476"/>
    </location>
</feature>
<feature type="region of interest" description="Ribokinase">
    <location>
        <begin position="1"/>
        <end position="318"/>
    </location>
</feature>
<feature type="region of interest" description="Cytidylyltransferase">
    <location>
        <begin position="344"/>
        <end position="476"/>
    </location>
</feature>
<feature type="active site" evidence="1">
    <location>
        <position position="264"/>
    </location>
</feature>
<feature type="binding site" evidence="1">
    <location>
        <begin position="195"/>
        <end position="198"/>
    </location>
    <ligand>
        <name>ATP</name>
        <dbReference type="ChEBI" id="CHEBI:30616"/>
    </ligand>
</feature>
<evidence type="ECO:0000255" key="1">
    <source>
        <dbReference type="HAMAP-Rule" id="MF_01603"/>
    </source>
</evidence>
<gene>
    <name evidence="1" type="primary">hldE</name>
    <name type="synonym">rfaE</name>
    <name type="synonym">waaE</name>
    <name type="ordered locus">YE3673</name>
</gene>
<name>HLDE_YERE8</name>
<comment type="function">
    <text evidence="1">Catalyzes the phosphorylation of D-glycero-D-manno-heptose 7-phosphate at the C-1 position to selectively form D-glycero-beta-D-manno-heptose-1,7-bisphosphate.</text>
</comment>
<comment type="function">
    <text evidence="1">Catalyzes the ADP transfer from ATP to D-glycero-beta-D-manno-heptose 1-phosphate, yielding ADP-D-glycero-beta-D-manno-heptose.</text>
</comment>
<comment type="catalytic activity">
    <reaction evidence="1">
        <text>D-glycero-beta-D-manno-heptose 7-phosphate + ATP = D-glycero-beta-D-manno-heptose 1,7-bisphosphate + ADP + H(+)</text>
        <dbReference type="Rhea" id="RHEA:27473"/>
        <dbReference type="ChEBI" id="CHEBI:15378"/>
        <dbReference type="ChEBI" id="CHEBI:30616"/>
        <dbReference type="ChEBI" id="CHEBI:60204"/>
        <dbReference type="ChEBI" id="CHEBI:60208"/>
        <dbReference type="ChEBI" id="CHEBI:456216"/>
        <dbReference type="EC" id="2.7.1.167"/>
    </reaction>
</comment>
<comment type="catalytic activity">
    <reaction evidence="1">
        <text>D-glycero-beta-D-manno-heptose 1-phosphate + ATP + H(+) = ADP-D-glycero-beta-D-manno-heptose + diphosphate</text>
        <dbReference type="Rhea" id="RHEA:27465"/>
        <dbReference type="ChEBI" id="CHEBI:15378"/>
        <dbReference type="ChEBI" id="CHEBI:30616"/>
        <dbReference type="ChEBI" id="CHEBI:33019"/>
        <dbReference type="ChEBI" id="CHEBI:59967"/>
        <dbReference type="ChEBI" id="CHEBI:61593"/>
        <dbReference type="EC" id="2.7.7.70"/>
    </reaction>
</comment>
<comment type="pathway">
    <text evidence="1">Nucleotide-sugar biosynthesis; ADP-L-glycero-beta-D-manno-heptose biosynthesis; ADP-L-glycero-beta-D-manno-heptose from D-glycero-beta-D-manno-heptose 7-phosphate: step 1/4.</text>
</comment>
<comment type="pathway">
    <text evidence="1">Nucleotide-sugar biosynthesis; ADP-L-glycero-beta-D-manno-heptose biosynthesis; ADP-L-glycero-beta-D-manno-heptose from D-glycero-beta-D-manno-heptose 7-phosphate: step 3/4.</text>
</comment>
<comment type="subunit">
    <text evidence="1">Homodimer.</text>
</comment>
<comment type="similarity">
    <text evidence="1">In the N-terminal section; belongs to the carbohydrate kinase PfkB family.</text>
</comment>
<comment type="similarity">
    <text evidence="1">In the C-terminal section; belongs to the cytidylyltransferase family.</text>
</comment>
<protein>
    <recommendedName>
        <fullName evidence="1">Bifunctional protein HldE</fullName>
    </recommendedName>
    <domain>
        <recommendedName>
            <fullName evidence="1">D-beta-D-heptose 7-phosphate kinase</fullName>
            <ecNumber evidence="1">2.7.1.167</ecNumber>
        </recommendedName>
        <alternativeName>
            <fullName evidence="1">D-beta-D-heptose 7-phosphotransferase</fullName>
        </alternativeName>
        <alternativeName>
            <fullName evidence="1">D-glycero-beta-D-manno-heptose-7-phosphate kinase</fullName>
        </alternativeName>
    </domain>
    <domain>
        <recommendedName>
            <fullName evidence="1">D-beta-D-heptose 1-phosphate adenylyltransferase</fullName>
            <ecNumber evidence="1">2.7.7.70</ecNumber>
        </recommendedName>
        <alternativeName>
            <fullName evidence="1">D-glycero-beta-D-manno-heptose 1-phosphate adenylyltransferase</fullName>
        </alternativeName>
    </domain>
</protein>
<sequence>MKVTLPDFRRAGVLVVGDVMLDRYWYGPTSRISPEAPVPVVKVDTIEERPGGAANVAMNIASLGAISRLVGLTGIDDAARALTSKLNEVQVRCDFVSVPTHPTITKLRVLSRNQQLIRLDFEEGFDGVDPQPIFERIQQALPQIGALVLSDYAKGALNSVQTMIQLARKAKVPVLIDPKGSDFERYRGATLLTPNLSEFEAVVGHCKNEEELVSRGMKLVADFELSALLVTRSEQGMTLLQPGKPPLHLPTQAQEVFDVTGAGDTVIGVLAAALAAGNSLEESCFLANAAAGVVVGKLGTSTVSPIELENAIRGRAETGFGVMDEQQLKKAVAQARQRGEKVVMTNGIFDILHAGHVSYLANARKLGDRLIVAVNSDASTKRLKGEKRPVNPLDQRMIVLGALEAVDWVVPFEEDTPQRLIADILPDLLVKGGDYKPDEIAGSAEVWAAGGEVKVLNFEDGVSTTNIIQSIKNGLG</sequence>
<organism>
    <name type="scientific">Yersinia enterocolitica serotype O:8 / biotype 1B (strain NCTC 13174 / 8081)</name>
    <dbReference type="NCBI Taxonomy" id="393305"/>
    <lineage>
        <taxon>Bacteria</taxon>
        <taxon>Pseudomonadati</taxon>
        <taxon>Pseudomonadota</taxon>
        <taxon>Gammaproteobacteria</taxon>
        <taxon>Enterobacterales</taxon>
        <taxon>Yersiniaceae</taxon>
        <taxon>Yersinia</taxon>
    </lineage>
</organism>